<keyword id="KW-0325">Glycoprotein</keyword>
<keyword id="KW-0406">Ion transport</keyword>
<keyword id="KW-0472">Membrane</keyword>
<keyword id="KW-1185">Reference proteome</keyword>
<keyword id="KW-0812">Transmembrane</keyword>
<keyword id="KW-1133">Transmembrane helix</keyword>
<keyword id="KW-0813">Transport</keyword>
<keyword id="KW-0862">Zinc</keyword>
<keyword id="KW-0864">Zinc transport</keyword>
<dbReference type="EMBL" id="BX284604">
    <property type="protein sequence ID" value="CAB17070.2"/>
    <property type="molecule type" value="Genomic_DNA"/>
</dbReference>
<dbReference type="PIR" id="T23089">
    <property type="entry name" value="T23089"/>
</dbReference>
<dbReference type="RefSeq" id="NP_510563.2">
    <property type="nucleotide sequence ID" value="NM_078162.7"/>
</dbReference>
<dbReference type="SMR" id="Q9XTQ7"/>
<dbReference type="BioGRID" id="46534">
    <property type="interactions" value="3"/>
</dbReference>
<dbReference type="DIP" id="DIP-24382N"/>
<dbReference type="FunCoup" id="Q9XTQ7">
    <property type="interactions" value="2173"/>
</dbReference>
<dbReference type="IntAct" id="Q9XTQ7">
    <property type="interactions" value="1"/>
</dbReference>
<dbReference type="STRING" id="6239.H13N06.5.1"/>
<dbReference type="GlyCosmos" id="Q9XTQ7">
    <property type="glycosylation" value="3 sites, No reported glycans"/>
</dbReference>
<dbReference type="PaxDb" id="6239-H13N06.5"/>
<dbReference type="PeptideAtlas" id="Q9XTQ7"/>
<dbReference type="EnsemblMetazoa" id="H13N06.5.1">
    <property type="protein sequence ID" value="H13N06.5.1"/>
    <property type="gene ID" value="WBGene00006494"/>
</dbReference>
<dbReference type="GeneID" id="181640"/>
<dbReference type="KEGG" id="cel:CELE_H13N06.5"/>
<dbReference type="AGR" id="WB:WBGene00006494"/>
<dbReference type="CTD" id="181640"/>
<dbReference type="WormBase" id="H13N06.5">
    <property type="protein sequence ID" value="CE38718"/>
    <property type="gene ID" value="WBGene00006494"/>
    <property type="gene designation" value="zipt-7.2"/>
</dbReference>
<dbReference type="eggNOG" id="KOG2693">
    <property type="taxonomic scope" value="Eukaryota"/>
</dbReference>
<dbReference type="GeneTree" id="ENSGT00940000160076"/>
<dbReference type="HOGENOM" id="CLU_015114_0_1_1"/>
<dbReference type="InParanoid" id="Q9XTQ7"/>
<dbReference type="OMA" id="IWLHSIG"/>
<dbReference type="OrthoDB" id="200954at2759"/>
<dbReference type="PhylomeDB" id="Q9XTQ7"/>
<dbReference type="Reactome" id="R-CEL-442380">
    <property type="pathway name" value="Zinc influx into cells by the SLC39 gene family"/>
</dbReference>
<dbReference type="SignaLink" id="Q9XTQ7"/>
<dbReference type="PRO" id="PR:Q9XTQ7"/>
<dbReference type="Proteomes" id="UP000001940">
    <property type="component" value="Chromosome IV"/>
</dbReference>
<dbReference type="Bgee" id="WBGene00006494">
    <property type="expression patterns" value="Expressed in pharyngeal muscle cell (C elegans) and 4 other cell types or tissues"/>
</dbReference>
<dbReference type="GO" id="GO:0016020">
    <property type="term" value="C:membrane"/>
    <property type="evidence" value="ECO:0007669"/>
    <property type="project" value="UniProtKB-SubCell"/>
</dbReference>
<dbReference type="GO" id="GO:0005385">
    <property type="term" value="F:zinc ion transmembrane transporter activity"/>
    <property type="evidence" value="ECO:0000318"/>
    <property type="project" value="GO_Central"/>
</dbReference>
<dbReference type="GO" id="GO:0006882">
    <property type="term" value="P:intracellular zinc ion homeostasis"/>
    <property type="evidence" value="ECO:0000318"/>
    <property type="project" value="GO_Central"/>
</dbReference>
<dbReference type="GO" id="GO:0071577">
    <property type="term" value="P:zinc ion transmembrane transport"/>
    <property type="evidence" value="ECO:0000318"/>
    <property type="project" value="GO_Central"/>
</dbReference>
<dbReference type="InterPro" id="IPR003689">
    <property type="entry name" value="ZIP"/>
</dbReference>
<dbReference type="PANTHER" id="PTHR16950:SF25">
    <property type="entry name" value="ZINC TRANSPORTER SLC39A7"/>
    <property type="match status" value="1"/>
</dbReference>
<dbReference type="PANTHER" id="PTHR16950">
    <property type="entry name" value="ZINC TRANSPORTER SLC39A7 HISTIDINE-RICH MEMBRANE PROTEIN KE4"/>
    <property type="match status" value="1"/>
</dbReference>
<dbReference type="Pfam" id="PF02535">
    <property type="entry name" value="Zip"/>
    <property type="match status" value="1"/>
</dbReference>
<name>ZPT72_CAEEL</name>
<accession>Q9XTQ7</accession>
<gene>
    <name evidence="6" type="primary">zipt-7.2</name>
    <name evidence="6" type="synonym">hke-4.2</name>
    <name evidence="6" type="ORF">H13N06.5</name>
</gene>
<proteinExistence type="evidence at transcript level"/>
<feature type="chain" id="PRO_0000213695" description="Zinc transporter zipt-7.2">
    <location>
        <begin position="1"/>
        <end position="462"/>
    </location>
</feature>
<feature type="transmembrane region" description="Helical" evidence="2">
    <location>
        <begin position="2"/>
        <end position="22"/>
    </location>
</feature>
<feature type="transmembrane region" description="Helical" evidence="2">
    <location>
        <begin position="161"/>
        <end position="181"/>
    </location>
</feature>
<feature type="transmembrane region" description="Helical" evidence="2">
    <location>
        <begin position="194"/>
        <end position="214"/>
    </location>
</feature>
<feature type="transmembrane region" description="Helical" evidence="2">
    <location>
        <begin position="244"/>
        <end position="264"/>
    </location>
</feature>
<feature type="transmembrane region" description="Helical" evidence="2">
    <location>
        <begin position="333"/>
        <end position="353"/>
    </location>
</feature>
<feature type="transmembrane region" description="Helical" evidence="2">
    <location>
        <begin position="376"/>
        <end position="396"/>
    </location>
</feature>
<feature type="transmembrane region" description="Helical" evidence="2">
    <location>
        <begin position="410"/>
        <end position="430"/>
    </location>
</feature>
<feature type="transmembrane region" description="Helical" evidence="2">
    <location>
        <begin position="441"/>
        <end position="461"/>
    </location>
</feature>
<feature type="region of interest" description="Disordered" evidence="3">
    <location>
        <begin position="39"/>
        <end position="134"/>
    </location>
</feature>
<feature type="region of interest" description="Disordered" evidence="3">
    <location>
        <begin position="219"/>
        <end position="239"/>
    </location>
</feature>
<feature type="region of interest" description="Disordered" evidence="3">
    <location>
        <begin position="270"/>
        <end position="307"/>
    </location>
</feature>
<feature type="compositionally biased region" description="Basic residues" evidence="3">
    <location>
        <begin position="40"/>
        <end position="51"/>
    </location>
</feature>
<feature type="compositionally biased region" description="Low complexity" evidence="3">
    <location>
        <begin position="65"/>
        <end position="74"/>
    </location>
</feature>
<feature type="compositionally biased region" description="Basic and acidic residues" evidence="3">
    <location>
        <begin position="75"/>
        <end position="94"/>
    </location>
</feature>
<feature type="compositionally biased region" description="Basic residues" evidence="3">
    <location>
        <begin position="111"/>
        <end position="120"/>
    </location>
</feature>
<feature type="compositionally biased region" description="Basic and acidic residues" evidence="3">
    <location>
        <begin position="121"/>
        <end position="132"/>
    </location>
</feature>
<feature type="compositionally biased region" description="Basic and acidic residues" evidence="3">
    <location>
        <begin position="281"/>
        <end position="307"/>
    </location>
</feature>
<feature type="glycosylation site" description="N-linked (GlcNAc...) asparagine" evidence="2">
    <location>
        <position position="184"/>
    </location>
</feature>
<feature type="glycosylation site" description="N-linked (GlcNAc...) asparagine" evidence="2">
    <location>
        <position position="326"/>
    </location>
</feature>
<feature type="glycosylation site" description="N-linked (GlcNAc...) asparagine" evidence="2">
    <location>
        <position position="435"/>
    </location>
</feature>
<comment type="function">
    <text evidence="1">Zinc transporter.</text>
</comment>
<comment type="subcellular location">
    <subcellularLocation>
        <location evidence="5">Membrane</location>
        <topology evidence="5">Multi-pass membrane protein</topology>
    </subcellularLocation>
</comment>
<comment type="tissue specificity">
    <text evidence="4">Expressed in somatic tissues.</text>
</comment>
<comment type="similarity">
    <text evidence="5">Belongs to the ZIP transporter (TC 2.A.5) family. KE4/Catsup subfamily.</text>
</comment>
<evidence type="ECO:0000250" key="1">
    <source>
        <dbReference type="UniProtKB" id="Q92504"/>
    </source>
</evidence>
<evidence type="ECO:0000255" key="2"/>
<evidence type="ECO:0000256" key="3">
    <source>
        <dbReference type="SAM" id="MobiDB-lite"/>
    </source>
</evidence>
<evidence type="ECO:0000269" key="4">
    <source>
    </source>
</evidence>
<evidence type="ECO:0000305" key="5"/>
<evidence type="ECO:0000312" key="6">
    <source>
        <dbReference type="WormBase" id="H13N06.5"/>
    </source>
</evidence>
<organism>
    <name type="scientific">Caenorhabditis elegans</name>
    <dbReference type="NCBI Taxonomy" id="6239"/>
    <lineage>
        <taxon>Eukaryota</taxon>
        <taxon>Metazoa</taxon>
        <taxon>Ecdysozoa</taxon>
        <taxon>Nematoda</taxon>
        <taxon>Chromadorea</taxon>
        <taxon>Rhabditida</taxon>
        <taxon>Rhabditina</taxon>
        <taxon>Rhabditomorpha</taxon>
        <taxon>Rhabditoidea</taxon>
        <taxon>Rhabditidae</taxon>
        <taxon>Peloderinae</taxon>
        <taxon>Caenorhabditis</taxon>
    </lineage>
</organism>
<protein>
    <recommendedName>
        <fullName evidence="5">Zinc transporter zipt-7.2</fullName>
    </recommendedName>
    <alternativeName>
        <fullName evidence="5">Histidine-rich membrane protein KE4 homolog 2</fullName>
    </alternativeName>
</protein>
<sequence>MLVKSCIFLSFLAIAAYGQAHLKYTKEMNDPEYVQQNVHHQGHGHAHGGHGHAHDADGGCPYAKAAAAEAATAAAHDHGHAHDHDHGHAHDHGHAHDHHGHSHDEEEDHHHGHAHDHHGHSHEDHGHSHGAESAKQVGDEYQYTGFLSFLNDAKTRLWVYAISATLLISAAPCFILMFIPIQANTSESGPLLKVLLAFGSGGLLGDAFLHLIPHATPAGDGHGHSHSHGHSHGGGGHSHGAHDMSVGGWVLGGIIAFLTVEKLVRILRGEDGHGHSHGHSHGGEKKETKEKDSKDKVAKKEEKPEKDEQSIKVTAYLNLAADFTHNFTDGLAIGASFIAGTTVGIVTMITVLVHEVPHEIGDFAILIQSGYSKKKAMLIQLVTALGALSGCVISLFSADADALADAAASSWVLPFTAGGFIYIATVSVIPELLENSSFFQTVKEIFAILTGIFLMYLIAIYE</sequence>
<reference key="1">
    <citation type="journal article" date="1998" name="Science">
        <title>Genome sequence of the nematode C. elegans: a platform for investigating biology.</title>
        <authorList>
            <consortium name="The C. elegans sequencing consortium"/>
        </authorList>
    </citation>
    <scope>NUCLEOTIDE SEQUENCE [LARGE SCALE GENOMIC DNA]</scope>
    <source>
        <strain>Bristol N2</strain>
    </source>
</reference>
<reference key="2">
    <citation type="journal article" date="2018" name="PLoS Biol.">
        <title>The zinc transporter ZIPT-7.1 regulates sperm activation in nematodes.</title>
        <authorList>
            <person name="Zhao Y."/>
            <person name="Tan C.H."/>
            <person name="Krauchunas A."/>
            <person name="Scharf A."/>
            <person name="Dietrich N."/>
            <person name="Warnhoff K."/>
            <person name="Yuan Z."/>
            <person name="Druzhinina M."/>
            <person name="Gu S.G."/>
            <person name="Miao L."/>
            <person name="Singson A."/>
            <person name="Ellis R.E."/>
            <person name="Kornfeld K."/>
        </authorList>
    </citation>
    <scope>TISSUE SPECIFICITY</scope>
</reference>